<name>DPO41_METMA</name>
<organism>
    <name type="scientific">Methanosarcina mazei (strain ATCC BAA-159 / DSM 3647 / Goe1 / Go1 / JCM 11833 / OCM 88)</name>
    <name type="common">Methanosarcina frisia</name>
    <dbReference type="NCBI Taxonomy" id="192952"/>
    <lineage>
        <taxon>Archaea</taxon>
        <taxon>Methanobacteriati</taxon>
        <taxon>Methanobacteriota</taxon>
        <taxon>Stenosarchaea group</taxon>
        <taxon>Methanomicrobia</taxon>
        <taxon>Methanosarcinales</taxon>
        <taxon>Methanosarcinaceae</taxon>
        <taxon>Methanosarcina</taxon>
    </lineage>
</organism>
<feature type="chain" id="PRO_0000173971" description="DNA polymerase IV 1">
    <location>
        <begin position="1"/>
        <end position="365"/>
    </location>
</feature>
<feature type="domain" description="UmuC">
    <location>
        <begin position="6"/>
        <end position="196"/>
    </location>
</feature>
<feature type="active site" evidence="1">
    <location>
        <position position="114"/>
    </location>
</feature>
<feature type="binding site" evidence="1">
    <location>
        <position position="10"/>
    </location>
    <ligand>
        <name>Mg(2+)</name>
        <dbReference type="ChEBI" id="CHEBI:18420"/>
    </ligand>
</feature>
<feature type="binding site" evidence="1">
    <location>
        <position position="113"/>
    </location>
    <ligand>
        <name>Mg(2+)</name>
        <dbReference type="ChEBI" id="CHEBI:18420"/>
    </ligand>
</feature>
<feature type="site" description="Substrate discrimination" evidence="1">
    <location>
        <position position="15"/>
    </location>
</feature>
<protein>
    <recommendedName>
        <fullName>DNA polymerase IV 1</fullName>
        <shortName>Pol IV 1</shortName>
        <ecNumber>2.7.7.7</ecNumber>
    </recommendedName>
</protein>
<dbReference type="EC" id="2.7.7.7"/>
<dbReference type="EMBL" id="AE008384">
    <property type="protein sequence ID" value="AAM30582.1"/>
    <property type="molecule type" value="Genomic_DNA"/>
</dbReference>
<dbReference type="SMR" id="Q8PYH6"/>
<dbReference type="KEGG" id="mma:MM_0886"/>
<dbReference type="PATRIC" id="fig|192952.21.peg.1045"/>
<dbReference type="eggNOG" id="arCOG04582">
    <property type="taxonomic scope" value="Archaea"/>
</dbReference>
<dbReference type="HOGENOM" id="CLU_012348_1_2_2"/>
<dbReference type="Proteomes" id="UP000000595">
    <property type="component" value="Chromosome"/>
</dbReference>
<dbReference type="GO" id="GO:0005737">
    <property type="term" value="C:cytoplasm"/>
    <property type="evidence" value="ECO:0007669"/>
    <property type="project" value="UniProtKB-SubCell"/>
</dbReference>
<dbReference type="GO" id="GO:0003684">
    <property type="term" value="F:damaged DNA binding"/>
    <property type="evidence" value="ECO:0007669"/>
    <property type="project" value="InterPro"/>
</dbReference>
<dbReference type="GO" id="GO:0003887">
    <property type="term" value="F:DNA-directed DNA polymerase activity"/>
    <property type="evidence" value="ECO:0007669"/>
    <property type="project" value="UniProtKB-UniRule"/>
</dbReference>
<dbReference type="GO" id="GO:0000287">
    <property type="term" value="F:magnesium ion binding"/>
    <property type="evidence" value="ECO:0007669"/>
    <property type="project" value="UniProtKB-UniRule"/>
</dbReference>
<dbReference type="GO" id="GO:0006261">
    <property type="term" value="P:DNA-templated DNA replication"/>
    <property type="evidence" value="ECO:0007669"/>
    <property type="project" value="UniProtKB-UniRule"/>
</dbReference>
<dbReference type="GO" id="GO:0042276">
    <property type="term" value="P:error-prone translesion synthesis"/>
    <property type="evidence" value="ECO:0007669"/>
    <property type="project" value="TreeGrafter"/>
</dbReference>
<dbReference type="CDD" id="cd03586">
    <property type="entry name" value="PolY_Pol_IV_kappa"/>
    <property type="match status" value="1"/>
</dbReference>
<dbReference type="FunFam" id="3.40.1170.60:FF:000009">
    <property type="entry name" value="DNA polymerase IV"/>
    <property type="match status" value="1"/>
</dbReference>
<dbReference type="Gene3D" id="3.30.70.270">
    <property type="match status" value="1"/>
</dbReference>
<dbReference type="Gene3D" id="3.40.1170.60">
    <property type="match status" value="1"/>
</dbReference>
<dbReference type="Gene3D" id="1.10.150.20">
    <property type="entry name" value="5' to 3' exonuclease, C-terminal subdomain"/>
    <property type="match status" value="1"/>
</dbReference>
<dbReference type="Gene3D" id="3.30.1490.100">
    <property type="entry name" value="DNA polymerase, Y-family, little finger domain"/>
    <property type="match status" value="1"/>
</dbReference>
<dbReference type="HAMAP" id="MF_01113">
    <property type="entry name" value="DNApol_IV"/>
    <property type="match status" value="1"/>
</dbReference>
<dbReference type="InterPro" id="IPR043502">
    <property type="entry name" value="DNA/RNA_pol_sf"/>
</dbReference>
<dbReference type="InterPro" id="IPR036775">
    <property type="entry name" value="DNA_pol_Y-fam_lit_finger_sf"/>
</dbReference>
<dbReference type="InterPro" id="IPR017961">
    <property type="entry name" value="DNA_pol_Y-fam_little_finger"/>
</dbReference>
<dbReference type="InterPro" id="IPR050116">
    <property type="entry name" value="DNA_polymerase-Y"/>
</dbReference>
<dbReference type="InterPro" id="IPR022880">
    <property type="entry name" value="DNApol_IV"/>
</dbReference>
<dbReference type="InterPro" id="IPR024728">
    <property type="entry name" value="PolY_HhH_motif"/>
</dbReference>
<dbReference type="InterPro" id="IPR043128">
    <property type="entry name" value="Rev_trsase/Diguanyl_cyclase"/>
</dbReference>
<dbReference type="InterPro" id="IPR001126">
    <property type="entry name" value="UmuC"/>
</dbReference>
<dbReference type="NCBIfam" id="NF002677">
    <property type="entry name" value="PRK02406.1"/>
    <property type="match status" value="1"/>
</dbReference>
<dbReference type="PANTHER" id="PTHR11076:SF33">
    <property type="entry name" value="DNA POLYMERASE KAPPA"/>
    <property type="match status" value="1"/>
</dbReference>
<dbReference type="PANTHER" id="PTHR11076">
    <property type="entry name" value="DNA REPAIR POLYMERASE UMUC / TRANSFERASE FAMILY MEMBER"/>
    <property type="match status" value="1"/>
</dbReference>
<dbReference type="Pfam" id="PF00817">
    <property type="entry name" value="IMS"/>
    <property type="match status" value="1"/>
</dbReference>
<dbReference type="Pfam" id="PF11799">
    <property type="entry name" value="IMS_C"/>
    <property type="match status" value="1"/>
</dbReference>
<dbReference type="Pfam" id="PF11798">
    <property type="entry name" value="IMS_HHH"/>
    <property type="match status" value="1"/>
</dbReference>
<dbReference type="SUPFAM" id="SSF56672">
    <property type="entry name" value="DNA/RNA polymerases"/>
    <property type="match status" value="1"/>
</dbReference>
<dbReference type="SUPFAM" id="SSF100879">
    <property type="entry name" value="Lesion bypass DNA polymerase (Y-family), little finger domain"/>
    <property type="match status" value="1"/>
</dbReference>
<dbReference type="PROSITE" id="PS50173">
    <property type="entry name" value="UMUC"/>
    <property type="match status" value="1"/>
</dbReference>
<sequence>MMQRVVLHIDMDYFFAAIEERENPELREKAVVVCMLSGRSELSGSVSTCNYVAREFGIRSGMPCSRAKKLNPEAVFLPVRKDFYTSVSDRIMEILRSYADPGNGDSFEQISVDEAFLESSERTGGDFRLAFEVGMQIKKEIKEKENLTCSIGIGPNKLISKMASSAKKPDGITVVSPQDLEAFLWPLNVSKLWGIGSVTAGKLQEMGIVTVKDLAERDVIELISIFGKSRGTWLKQAASGIDDSPLKERDGSEQIGRIATLPEDSLDKKLISSLIERLAGDVIEKLDSRELSFRIVTVTVINSNFRMYTKSRTLSHPVSSKEVLLQVSGEILDEFLSENRTEFRRVGVRVGGLQKKKGQKSLFDY</sequence>
<evidence type="ECO:0000250" key="1"/>
<evidence type="ECO:0000305" key="2"/>
<reference key="1">
    <citation type="journal article" date="2002" name="J. Mol. Microbiol. Biotechnol.">
        <title>The genome of Methanosarcina mazei: evidence for lateral gene transfer between Bacteria and Archaea.</title>
        <authorList>
            <person name="Deppenmeier U."/>
            <person name="Johann A."/>
            <person name="Hartsch T."/>
            <person name="Merkl R."/>
            <person name="Schmitz R.A."/>
            <person name="Martinez-Arias R."/>
            <person name="Henne A."/>
            <person name="Wiezer A."/>
            <person name="Baeumer S."/>
            <person name="Jacobi C."/>
            <person name="Brueggemann H."/>
            <person name="Lienard T."/>
            <person name="Christmann A."/>
            <person name="Boemecke M."/>
            <person name="Steckel S."/>
            <person name="Bhattacharyya A."/>
            <person name="Lykidis A."/>
            <person name="Overbeek R."/>
            <person name="Klenk H.-P."/>
            <person name="Gunsalus R.P."/>
            <person name="Fritz H.-J."/>
            <person name="Gottschalk G."/>
        </authorList>
    </citation>
    <scope>NUCLEOTIDE SEQUENCE [LARGE SCALE GENOMIC DNA]</scope>
    <source>
        <strain>ATCC BAA-159 / DSM 3647 / Goe1 / Go1 / JCM 11833 / OCM 88</strain>
    </source>
</reference>
<comment type="function">
    <text evidence="1">Poorly processive, error-prone DNA polymerase involved in untargeted mutagenesis. Copies undamaged DNA at stalled replication forks, which arise in vivo from mismatched or misaligned primer ends. These misaligned primers can be extended by PolIV. Exhibits no 3'-5' exonuclease (proofreading) activity. May be involved in translesional synthesis (By similarity).</text>
</comment>
<comment type="catalytic activity">
    <reaction>
        <text>DNA(n) + a 2'-deoxyribonucleoside 5'-triphosphate = DNA(n+1) + diphosphate</text>
        <dbReference type="Rhea" id="RHEA:22508"/>
        <dbReference type="Rhea" id="RHEA-COMP:17339"/>
        <dbReference type="Rhea" id="RHEA-COMP:17340"/>
        <dbReference type="ChEBI" id="CHEBI:33019"/>
        <dbReference type="ChEBI" id="CHEBI:61560"/>
        <dbReference type="ChEBI" id="CHEBI:173112"/>
        <dbReference type="EC" id="2.7.7.7"/>
    </reaction>
</comment>
<comment type="cofactor">
    <cofactor evidence="1">
        <name>Mg(2+)</name>
        <dbReference type="ChEBI" id="CHEBI:18420"/>
    </cofactor>
    <text evidence="1">Binds 2 magnesium ions per subunit.</text>
</comment>
<comment type="subunit">
    <text evidence="1">Monomer.</text>
</comment>
<comment type="subcellular location">
    <subcellularLocation>
        <location evidence="1">Cytoplasm</location>
    </subcellularLocation>
</comment>
<comment type="similarity">
    <text evidence="2">Belongs to the DNA polymerase type-Y family.</text>
</comment>
<keyword id="KW-0963">Cytoplasm</keyword>
<keyword id="KW-0227">DNA damage</keyword>
<keyword id="KW-0234">DNA repair</keyword>
<keyword id="KW-0235">DNA replication</keyword>
<keyword id="KW-0238">DNA-binding</keyword>
<keyword id="KW-0239">DNA-directed DNA polymerase</keyword>
<keyword id="KW-0460">Magnesium</keyword>
<keyword id="KW-0479">Metal-binding</keyword>
<keyword id="KW-0515">Mutator protein</keyword>
<keyword id="KW-0548">Nucleotidyltransferase</keyword>
<keyword id="KW-0808">Transferase</keyword>
<gene>
    <name type="primary">dbh1</name>
    <name type="ordered locus">MM_0886</name>
</gene>
<proteinExistence type="inferred from homology"/>
<accession>Q8PYH6</accession>